<sequence length="490" mass="51217">MRRHDPIVAIASAAGRGAIGIVRVSGNALGALAQALCGRALQPRMATYLAFRDARGQPIDQGLALYFPGPHSYTGEDVLELQAHGGPVVLQLLLARCLEAGAGADPATGRPCLPGLRLAQPGEFTERAFLNDKIDLAQAEAIADLIDASTEAAARSASRSLSGAFSAGIHGLCDALIALRTLVEASLDFPEEETDFLHQADARGQLSRLRQALGAVLQQARQGALLRDGIEVVIAGQPNAGKSSLLNALAGAELAIVTPVAGTTRDKVQQTIQIEGVPLRIIDTAGLRASDDEVERIGIARSWEAMAAADAVLFLHDLARAQTPKYIADDAEIERALARKLPPGVAVIDVWNKLDCVAAPAELAAPTAPTESAAVPPASARPAPAPRPAVQLSARTGQGLDGLRRILLEVAGWQSVPEGICIARARHVQALQMAAAHLEQAADQLQARGAALELLAEELRLAQNALDSITGAFTSDDLLGAIFARFCIGK</sequence>
<protein>
    <recommendedName>
        <fullName evidence="1">tRNA modification GTPase MnmE</fullName>
        <ecNumber evidence="1">3.6.-.-</ecNumber>
    </recommendedName>
</protein>
<reference key="1">
    <citation type="submission" date="2006-12" db="EMBL/GenBank/DDBJ databases">
        <title>Complete sequence of chromosome 1 of Verminephrobacter eiseniae EF01-2.</title>
        <authorList>
            <person name="Copeland A."/>
            <person name="Lucas S."/>
            <person name="Lapidus A."/>
            <person name="Barry K."/>
            <person name="Detter J.C."/>
            <person name="Glavina del Rio T."/>
            <person name="Dalin E."/>
            <person name="Tice H."/>
            <person name="Pitluck S."/>
            <person name="Chertkov O."/>
            <person name="Brettin T."/>
            <person name="Bruce D."/>
            <person name="Han C."/>
            <person name="Tapia R."/>
            <person name="Gilna P."/>
            <person name="Schmutz J."/>
            <person name="Larimer F."/>
            <person name="Land M."/>
            <person name="Hauser L."/>
            <person name="Kyrpides N."/>
            <person name="Kim E."/>
            <person name="Stahl D."/>
            <person name="Richardson P."/>
        </authorList>
    </citation>
    <scope>NUCLEOTIDE SEQUENCE [LARGE SCALE GENOMIC DNA]</scope>
    <source>
        <strain>EF01-2</strain>
    </source>
</reference>
<keyword id="KW-0963">Cytoplasm</keyword>
<keyword id="KW-0342">GTP-binding</keyword>
<keyword id="KW-0378">Hydrolase</keyword>
<keyword id="KW-0460">Magnesium</keyword>
<keyword id="KW-0479">Metal-binding</keyword>
<keyword id="KW-0547">Nucleotide-binding</keyword>
<keyword id="KW-0630">Potassium</keyword>
<keyword id="KW-1185">Reference proteome</keyword>
<keyword id="KW-0819">tRNA processing</keyword>
<evidence type="ECO:0000255" key="1">
    <source>
        <dbReference type="HAMAP-Rule" id="MF_00379"/>
    </source>
</evidence>
<evidence type="ECO:0000256" key="2">
    <source>
        <dbReference type="SAM" id="MobiDB-lite"/>
    </source>
</evidence>
<proteinExistence type="inferred from homology"/>
<feature type="chain" id="PRO_0000345936" description="tRNA modification GTPase MnmE">
    <location>
        <begin position="1"/>
        <end position="490"/>
    </location>
</feature>
<feature type="domain" description="TrmE-type G">
    <location>
        <begin position="229"/>
        <end position="412"/>
    </location>
</feature>
<feature type="region of interest" description="Disordered" evidence="2">
    <location>
        <begin position="366"/>
        <end position="388"/>
    </location>
</feature>
<feature type="compositionally biased region" description="Low complexity" evidence="2">
    <location>
        <begin position="366"/>
        <end position="382"/>
    </location>
</feature>
<feature type="binding site" evidence="1">
    <location>
        <position position="23"/>
    </location>
    <ligand>
        <name>(6S)-5-formyl-5,6,7,8-tetrahydrofolate</name>
        <dbReference type="ChEBI" id="CHEBI:57457"/>
    </ligand>
</feature>
<feature type="binding site" evidence="1">
    <location>
        <position position="80"/>
    </location>
    <ligand>
        <name>(6S)-5-formyl-5,6,7,8-tetrahydrofolate</name>
        <dbReference type="ChEBI" id="CHEBI:57457"/>
    </ligand>
</feature>
<feature type="binding site" evidence="1">
    <location>
        <position position="133"/>
    </location>
    <ligand>
        <name>(6S)-5-formyl-5,6,7,8-tetrahydrofolate</name>
        <dbReference type="ChEBI" id="CHEBI:57457"/>
    </ligand>
</feature>
<feature type="binding site" evidence="1">
    <location>
        <begin position="239"/>
        <end position="244"/>
    </location>
    <ligand>
        <name>GTP</name>
        <dbReference type="ChEBI" id="CHEBI:37565"/>
    </ligand>
</feature>
<feature type="binding site" evidence="1">
    <location>
        <position position="239"/>
    </location>
    <ligand>
        <name>K(+)</name>
        <dbReference type="ChEBI" id="CHEBI:29103"/>
    </ligand>
</feature>
<feature type="binding site" evidence="1">
    <location>
        <position position="243"/>
    </location>
    <ligand>
        <name>Mg(2+)</name>
        <dbReference type="ChEBI" id="CHEBI:18420"/>
    </ligand>
</feature>
<feature type="binding site" evidence="1">
    <location>
        <begin position="258"/>
        <end position="264"/>
    </location>
    <ligand>
        <name>GTP</name>
        <dbReference type="ChEBI" id="CHEBI:37565"/>
    </ligand>
</feature>
<feature type="binding site" evidence="1">
    <location>
        <position position="258"/>
    </location>
    <ligand>
        <name>K(+)</name>
        <dbReference type="ChEBI" id="CHEBI:29103"/>
    </ligand>
</feature>
<feature type="binding site" evidence="1">
    <location>
        <position position="260"/>
    </location>
    <ligand>
        <name>K(+)</name>
        <dbReference type="ChEBI" id="CHEBI:29103"/>
    </ligand>
</feature>
<feature type="binding site" evidence="1">
    <location>
        <position position="263"/>
    </location>
    <ligand>
        <name>K(+)</name>
        <dbReference type="ChEBI" id="CHEBI:29103"/>
    </ligand>
</feature>
<feature type="binding site" evidence="1">
    <location>
        <position position="264"/>
    </location>
    <ligand>
        <name>Mg(2+)</name>
        <dbReference type="ChEBI" id="CHEBI:18420"/>
    </ligand>
</feature>
<feature type="binding site" evidence="1">
    <location>
        <begin position="283"/>
        <end position="286"/>
    </location>
    <ligand>
        <name>GTP</name>
        <dbReference type="ChEBI" id="CHEBI:37565"/>
    </ligand>
</feature>
<feature type="binding site" evidence="1">
    <location>
        <begin position="393"/>
        <end position="395"/>
    </location>
    <ligand>
        <name>GTP</name>
        <dbReference type="ChEBI" id="CHEBI:37565"/>
    </ligand>
</feature>
<feature type="binding site" evidence="1">
    <location>
        <position position="490"/>
    </location>
    <ligand>
        <name>(6S)-5-formyl-5,6,7,8-tetrahydrofolate</name>
        <dbReference type="ChEBI" id="CHEBI:57457"/>
    </ligand>
</feature>
<dbReference type="EC" id="3.6.-.-" evidence="1"/>
<dbReference type="EMBL" id="CP000542">
    <property type="protein sequence ID" value="ABM60697.1"/>
    <property type="molecule type" value="Genomic_DNA"/>
</dbReference>
<dbReference type="RefSeq" id="WP_011812675.1">
    <property type="nucleotide sequence ID" value="NC_008786.1"/>
</dbReference>
<dbReference type="SMR" id="A1WSU0"/>
<dbReference type="STRING" id="391735.Veis_5011"/>
<dbReference type="GeneID" id="76463266"/>
<dbReference type="KEGG" id="vei:Veis_5011"/>
<dbReference type="eggNOG" id="COG0486">
    <property type="taxonomic scope" value="Bacteria"/>
</dbReference>
<dbReference type="HOGENOM" id="CLU_019624_4_1_4"/>
<dbReference type="OrthoDB" id="9805918at2"/>
<dbReference type="Proteomes" id="UP000000374">
    <property type="component" value="Chromosome"/>
</dbReference>
<dbReference type="GO" id="GO:0005829">
    <property type="term" value="C:cytosol"/>
    <property type="evidence" value="ECO:0007669"/>
    <property type="project" value="TreeGrafter"/>
</dbReference>
<dbReference type="GO" id="GO:0005525">
    <property type="term" value="F:GTP binding"/>
    <property type="evidence" value="ECO:0007669"/>
    <property type="project" value="UniProtKB-UniRule"/>
</dbReference>
<dbReference type="GO" id="GO:0003924">
    <property type="term" value="F:GTPase activity"/>
    <property type="evidence" value="ECO:0007669"/>
    <property type="project" value="UniProtKB-UniRule"/>
</dbReference>
<dbReference type="GO" id="GO:0046872">
    <property type="term" value="F:metal ion binding"/>
    <property type="evidence" value="ECO:0007669"/>
    <property type="project" value="UniProtKB-KW"/>
</dbReference>
<dbReference type="GO" id="GO:0030488">
    <property type="term" value="P:tRNA methylation"/>
    <property type="evidence" value="ECO:0007669"/>
    <property type="project" value="TreeGrafter"/>
</dbReference>
<dbReference type="GO" id="GO:0002098">
    <property type="term" value="P:tRNA wobble uridine modification"/>
    <property type="evidence" value="ECO:0007669"/>
    <property type="project" value="TreeGrafter"/>
</dbReference>
<dbReference type="CDD" id="cd04164">
    <property type="entry name" value="trmE"/>
    <property type="match status" value="1"/>
</dbReference>
<dbReference type="CDD" id="cd14858">
    <property type="entry name" value="TrmE_N"/>
    <property type="match status" value="1"/>
</dbReference>
<dbReference type="Gene3D" id="3.40.50.300">
    <property type="entry name" value="P-loop containing nucleotide triphosphate hydrolases"/>
    <property type="match status" value="1"/>
</dbReference>
<dbReference type="Gene3D" id="3.30.1360.120">
    <property type="entry name" value="Probable tRNA modification gtpase trme, domain 1"/>
    <property type="match status" value="1"/>
</dbReference>
<dbReference type="Gene3D" id="1.20.120.430">
    <property type="entry name" value="tRNA modification GTPase MnmE domain 2"/>
    <property type="match status" value="1"/>
</dbReference>
<dbReference type="HAMAP" id="MF_00379">
    <property type="entry name" value="GTPase_MnmE"/>
    <property type="match status" value="1"/>
</dbReference>
<dbReference type="InterPro" id="IPR031168">
    <property type="entry name" value="G_TrmE"/>
</dbReference>
<dbReference type="InterPro" id="IPR006073">
    <property type="entry name" value="GTP-bd"/>
</dbReference>
<dbReference type="InterPro" id="IPR018948">
    <property type="entry name" value="GTP-bd_TrmE_N"/>
</dbReference>
<dbReference type="InterPro" id="IPR004520">
    <property type="entry name" value="GTPase_MnmE"/>
</dbReference>
<dbReference type="InterPro" id="IPR027368">
    <property type="entry name" value="MnmE_dom2"/>
</dbReference>
<dbReference type="InterPro" id="IPR025867">
    <property type="entry name" value="MnmE_helical"/>
</dbReference>
<dbReference type="InterPro" id="IPR027417">
    <property type="entry name" value="P-loop_NTPase"/>
</dbReference>
<dbReference type="InterPro" id="IPR005225">
    <property type="entry name" value="Small_GTP-bd"/>
</dbReference>
<dbReference type="InterPro" id="IPR027266">
    <property type="entry name" value="TrmE/GcvT_dom1"/>
</dbReference>
<dbReference type="NCBIfam" id="TIGR00450">
    <property type="entry name" value="mnmE_trmE_thdF"/>
    <property type="match status" value="1"/>
</dbReference>
<dbReference type="NCBIfam" id="NF003661">
    <property type="entry name" value="PRK05291.1-3"/>
    <property type="match status" value="1"/>
</dbReference>
<dbReference type="NCBIfam" id="TIGR00231">
    <property type="entry name" value="small_GTP"/>
    <property type="match status" value="1"/>
</dbReference>
<dbReference type="PANTHER" id="PTHR42714">
    <property type="entry name" value="TRNA MODIFICATION GTPASE GTPBP3"/>
    <property type="match status" value="1"/>
</dbReference>
<dbReference type="PANTHER" id="PTHR42714:SF2">
    <property type="entry name" value="TRNA MODIFICATION GTPASE GTPBP3, MITOCHONDRIAL"/>
    <property type="match status" value="1"/>
</dbReference>
<dbReference type="Pfam" id="PF01926">
    <property type="entry name" value="MMR_HSR1"/>
    <property type="match status" value="1"/>
</dbReference>
<dbReference type="Pfam" id="PF12631">
    <property type="entry name" value="MnmE_helical"/>
    <property type="match status" value="1"/>
</dbReference>
<dbReference type="Pfam" id="PF10396">
    <property type="entry name" value="TrmE_N"/>
    <property type="match status" value="1"/>
</dbReference>
<dbReference type="SUPFAM" id="SSF52540">
    <property type="entry name" value="P-loop containing nucleoside triphosphate hydrolases"/>
    <property type="match status" value="1"/>
</dbReference>
<dbReference type="SUPFAM" id="SSF116878">
    <property type="entry name" value="TrmE connector domain"/>
    <property type="match status" value="1"/>
</dbReference>
<dbReference type="PROSITE" id="PS51709">
    <property type="entry name" value="G_TRME"/>
    <property type="match status" value="1"/>
</dbReference>
<name>MNME_VEREI</name>
<comment type="function">
    <text evidence="1">Exhibits a very high intrinsic GTPase hydrolysis rate. Involved in the addition of a carboxymethylaminomethyl (cmnm) group at the wobble position (U34) of certain tRNAs, forming tRNA-cmnm(5)s(2)U34.</text>
</comment>
<comment type="cofactor">
    <cofactor evidence="1">
        <name>K(+)</name>
        <dbReference type="ChEBI" id="CHEBI:29103"/>
    </cofactor>
    <text evidence="1">Binds 1 potassium ion per subunit.</text>
</comment>
<comment type="subunit">
    <text evidence="1">Homodimer. Heterotetramer of two MnmE and two MnmG subunits.</text>
</comment>
<comment type="subcellular location">
    <subcellularLocation>
        <location evidence="1">Cytoplasm</location>
    </subcellularLocation>
</comment>
<comment type="similarity">
    <text evidence="1">Belongs to the TRAFAC class TrmE-Era-EngA-EngB-Septin-like GTPase superfamily. TrmE GTPase family.</text>
</comment>
<organism>
    <name type="scientific">Verminephrobacter eiseniae (strain EF01-2)</name>
    <dbReference type="NCBI Taxonomy" id="391735"/>
    <lineage>
        <taxon>Bacteria</taxon>
        <taxon>Pseudomonadati</taxon>
        <taxon>Pseudomonadota</taxon>
        <taxon>Betaproteobacteria</taxon>
        <taxon>Burkholderiales</taxon>
        <taxon>Comamonadaceae</taxon>
        <taxon>Verminephrobacter</taxon>
    </lineage>
</organism>
<accession>A1WSU0</accession>
<gene>
    <name evidence="1" type="primary">mnmE</name>
    <name evidence="1" type="synonym">trmE</name>
    <name type="ordered locus">Veis_5011</name>
</gene>